<comment type="function">
    <text evidence="1">Catalyzes the radical-mediated insertion of two sulfur atoms into the C-6 and C-8 positions of the octanoyl moiety bound to the lipoyl domains of lipoate-dependent enzymes, thereby converting the octanoylated domains into lipoylated derivatives.</text>
</comment>
<comment type="catalytic activity">
    <reaction evidence="1">
        <text>[[Fe-S] cluster scaffold protein carrying a second [4Fe-4S](2+) cluster] + N(6)-octanoyl-L-lysyl-[protein] + 2 oxidized [2Fe-2S]-[ferredoxin] + 2 S-adenosyl-L-methionine + 4 H(+) = [[Fe-S] cluster scaffold protein] + N(6)-[(R)-dihydrolipoyl]-L-lysyl-[protein] + 4 Fe(3+) + 2 hydrogen sulfide + 2 5'-deoxyadenosine + 2 L-methionine + 2 reduced [2Fe-2S]-[ferredoxin]</text>
        <dbReference type="Rhea" id="RHEA:16585"/>
        <dbReference type="Rhea" id="RHEA-COMP:9928"/>
        <dbReference type="Rhea" id="RHEA-COMP:10000"/>
        <dbReference type="Rhea" id="RHEA-COMP:10001"/>
        <dbReference type="Rhea" id="RHEA-COMP:10475"/>
        <dbReference type="Rhea" id="RHEA-COMP:14568"/>
        <dbReference type="Rhea" id="RHEA-COMP:14569"/>
        <dbReference type="ChEBI" id="CHEBI:15378"/>
        <dbReference type="ChEBI" id="CHEBI:17319"/>
        <dbReference type="ChEBI" id="CHEBI:29034"/>
        <dbReference type="ChEBI" id="CHEBI:29919"/>
        <dbReference type="ChEBI" id="CHEBI:33722"/>
        <dbReference type="ChEBI" id="CHEBI:33737"/>
        <dbReference type="ChEBI" id="CHEBI:33738"/>
        <dbReference type="ChEBI" id="CHEBI:57844"/>
        <dbReference type="ChEBI" id="CHEBI:59789"/>
        <dbReference type="ChEBI" id="CHEBI:78809"/>
        <dbReference type="ChEBI" id="CHEBI:83100"/>
        <dbReference type="EC" id="2.8.1.8"/>
    </reaction>
</comment>
<comment type="cofactor">
    <cofactor evidence="1">
        <name>[4Fe-4S] cluster</name>
        <dbReference type="ChEBI" id="CHEBI:49883"/>
    </cofactor>
    <text evidence="1">Binds 2 [4Fe-4S] clusters per subunit. One cluster is coordinated with 3 cysteines and an exchangeable S-adenosyl-L-methionine.</text>
</comment>
<comment type="pathway">
    <text evidence="1">Protein modification; protein lipoylation via endogenous pathway; protein N(6)-(lipoyl)lysine from octanoyl-[acyl-carrier-protein]: step 2/2.</text>
</comment>
<comment type="subcellular location">
    <subcellularLocation>
        <location evidence="1">Mitochondrion</location>
    </subcellularLocation>
</comment>
<comment type="miscellaneous">
    <text evidence="1">This protein may be expected to contain an N-terminal transit peptide but none has been predicted.</text>
</comment>
<comment type="similarity">
    <text evidence="1">Belongs to the radical SAM superfamily. Lipoyl synthase family.</text>
</comment>
<gene>
    <name evidence="1" type="primary">LIP1</name>
    <name type="ordered locus">Sb06g018660</name>
</gene>
<sequence>MHGRRHLAASLTRALTQAPSRSISSTPSLLQTLDPSVPSPSPPPAAEPGRLAELRRRLQADAPSLGDFAYSVEVGTRQRPLPKPKWMKETVPGGAKYAAIKAKLRELKLHTVCEEARCPNLGECWSGGETGTATATIMILGDTCTRGCRFCNVKTSRTPPPPDPDEPSNVAQAIASWGLEYIVITSVDRDDLPDQGSGHFAETVQKLKALKPEMLIEALVPDFRGDPSCVEKVATSGLHVFAHNIETVEELQRNVRDYRANFKQSIDVLKMAKEYAPPGTLTKTSIMLGCGETPDQVISTMEKVRAAGVDVITFGQYMRPSKRHMPVSEYVTPEAFEKYRALGVEMGFRYVASGPMVRSSYKAGEFYIKAMIEADRSKATTADSSA</sequence>
<proteinExistence type="inferred from homology"/>
<organism>
    <name type="scientific">Sorghum bicolor</name>
    <name type="common">Sorghum</name>
    <name type="synonym">Sorghum vulgare</name>
    <dbReference type="NCBI Taxonomy" id="4558"/>
    <lineage>
        <taxon>Eukaryota</taxon>
        <taxon>Viridiplantae</taxon>
        <taxon>Streptophyta</taxon>
        <taxon>Embryophyta</taxon>
        <taxon>Tracheophyta</taxon>
        <taxon>Spermatophyta</taxon>
        <taxon>Magnoliopsida</taxon>
        <taxon>Liliopsida</taxon>
        <taxon>Poales</taxon>
        <taxon>Poaceae</taxon>
        <taxon>PACMAD clade</taxon>
        <taxon>Panicoideae</taxon>
        <taxon>Andropogonodae</taxon>
        <taxon>Andropogoneae</taxon>
        <taxon>Sorghinae</taxon>
        <taxon>Sorghum</taxon>
    </lineage>
</organism>
<evidence type="ECO:0000255" key="1">
    <source>
        <dbReference type="HAMAP-Rule" id="MF_03128"/>
    </source>
</evidence>
<evidence type="ECO:0000255" key="2">
    <source>
        <dbReference type="PROSITE-ProRule" id="PRU01266"/>
    </source>
</evidence>
<evidence type="ECO:0000256" key="3">
    <source>
        <dbReference type="SAM" id="MobiDB-lite"/>
    </source>
</evidence>
<accession>C5Y9R0</accession>
<protein>
    <recommendedName>
        <fullName evidence="1">Lipoyl synthase, mitochondrial</fullName>
        <ecNumber evidence="1">2.8.1.8</ecNumber>
    </recommendedName>
    <alternativeName>
        <fullName evidence="1">Lipoate synthase</fullName>
        <shortName evidence="1">LS</shortName>
        <shortName evidence="1">Lip-syn</shortName>
    </alternativeName>
    <alternativeName>
        <fullName evidence="1">Lipoic acid synthase</fullName>
    </alternativeName>
</protein>
<reference key="1">
    <citation type="journal article" date="2009" name="Nature">
        <title>The Sorghum bicolor genome and the diversification of grasses.</title>
        <authorList>
            <person name="Paterson A.H."/>
            <person name="Bowers J.E."/>
            <person name="Bruggmann R."/>
            <person name="Dubchak I."/>
            <person name="Grimwood J."/>
            <person name="Gundlach H."/>
            <person name="Haberer G."/>
            <person name="Hellsten U."/>
            <person name="Mitros T."/>
            <person name="Poliakov A."/>
            <person name="Schmutz J."/>
            <person name="Spannagl M."/>
            <person name="Tang H."/>
            <person name="Wang X."/>
            <person name="Wicker T."/>
            <person name="Bharti A.K."/>
            <person name="Chapman J."/>
            <person name="Feltus F.A."/>
            <person name="Gowik U."/>
            <person name="Grigoriev I.V."/>
            <person name="Lyons E."/>
            <person name="Maher C.A."/>
            <person name="Martis M."/>
            <person name="Narechania A."/>
            <person name="Otillar R.P."/>
            <person name="Penning B.W."/>
            <person name="Salamov A.A."/>
            <person name="Wang Y."/>
            <person name="Zhang L."/>
            <person name="Carpita N.C."/>
            <person name="Freeling M."/>
            <person name="Gingle A.R."/>
            <person name="Hash C.T."/>
            <person name="Keller B."/>
            <person name="Klein P."/>
            <person name="Kresovich S."/>
            <person name="McCann M.C."/>
            <person name="Ming R."/>
            <person name="Peterson D.G."/>
            <person name="Mehboob-ur-Rahman M."/>
            <person name="Ware D."/>
            <person name="Westhoff P."/>
            <person name="Mayer K.F.X."/>
            <person name="Messing J."/>
            <person name="Rokhsar D.S."/>
        </authorList>
    </citation>
    <scope>NUCLEOTIDE SEQUENCE [LARGE SCALE GENOMIC DNA]</scope>
    <source>
        <strain>cv. BTx623</strain>
    </source>
</reference>
<reference key="2">
    <citation type="journal article" date="2018" name="Plant J.">
        <title>The Sorghum bicolor reference genome: improved assembly, gene annotations, a transcriptome atlas, and signatures of genome organization.</title>
        <authorList>
            <person name="McCormick R.F."/>
            <person name="Truong S.K."/>
            <person name="Sreedasyam A."/>
            <person name="Jenkins J."/>
            <person name="Shu S."/>
            <person name="Sims D."/>
            <person name="Kennedy M."/>
            <person name="Amirebrahimi M."/>
            <person name="Weers B.D."/>
            <person name="McKinley B."/>
            <person name="Mattison A."/>
            <person name="Morishige D.T."/>
            <person name="Grimwood J."/>
            <person name="Schmutz J."/>
            <person name="Mullet J.E."/>
        </authorList>
    </citation>
    <scope>GENOME REANNOTATION</scope>
    <source>
        <strain>cv. BTx623</strain>
    </source>
</reference>
<feature type="chain" id="PRO_0000398856" description="Lipoyl synthase, mitochondrial">
    <location>
        <begin position="1"/>
        <end position="386"/>
    </location>
</feature>
<feature type="domain" description="Radical SAM core" evidence="2">
    <location>
        <begin position="129"/>
        <end position="349"/>
    </location>
</feature>
<feature type="region of interest" description="Disordered" evidence="3">
    <location>
        <begin position="1"/>
        <end position="48"/>
    </location>
</feature>
<feature type="compositionally biased region" description="Polar residues" evidence="3">
    <location>
        <begin position="13"/>
        <end position="34"/>
    </location>
</feature>
<feature type="compositionally biased region" description="Pro residues" evidence="3">
    <location>
        <begin position="37"/>
        <end position="46"/>
    </location>
</feature>
<feature type="binding site" evidence="1">
    <location>
        <position position="113"/>
    </location>
    <ligand>
        <name>[4Fe-4S] cluster</name>
        <dbReference type="ChEBI" id="CHEBI:49883"/>
        <label>1</label>
    </ligand>
</feature>
<feature type="binding site" evidence="1">
    <location>
        <position position="118"/>
    </location>
    <ligand>
        <name>[4Fe-4S] cluster</name>
        <dbReference type="ChEBI" id="CHEBI:49883"/>
        <label>1</label>
    </ligand>
</feature>
<feature type="binding site" evidence="1">
    <location>
        <position position="124"/>
    </location>
    <ligand>
        <name>[4Fe-4S] cluster</name>
        <dbReference type="ChEBI" id="CHEBI:49883"/>
        <label>1</label>
    </ligand>
</feature>
<feature type="binding site" evidence="1">
    <location>
        <position position="144"/>
    </location>
    <ligand>
        <name>[4Fe-4S] cluster</name>
        <dbReference type="ChEBI" id="CHEBI:49883"/>
        <label>2</label>
        <note>4Fe-4S-S-AdoMet</note>
    </ligand>
</feature>
<feature type="binding site" evidence="1">
    <location>
        <position position="148"/>
    </location>
    <ligand>
        <name>[4Fe-4S] cluster</name>
        <dbReference type="ChEBI" id="CHEBI:49883"/>
        <label>2</label>
        <note>4Fe-4S-S-AdoMet</note>
    </ligand>
</feature>
<feature type="binding site" evidence="1">
    <location>
        <position position="151"/>
    </location>
    <ligand>
        <name>[4Fe-4S] cluster</name>
        <dbReference type="ChEBI" id="CHEBI:49883"/>
        <label>2</label>
        <note>4Fe-4S-S-AdoMet</note>
    </ligand>
</feature>
<feature type="binding site" evidence="1">
    <location>
        <position position="360"/>
    </location>
    <ligand>
        <name>[4Fe-4S] cluster</name>
        <dbReference type="ChEBI" id="CHEBI:49883"/>
        <label>1</label>
    </ligand>
</feature>
<keyword id="KW-0004">4Fe-4S</keyword>
<keyword id="KW-0408">Iron</keyword>
<keyword id="KW-0411">Iron-sulfur</keyword>
<keyword id="KW-0479">Metal-binding</keyword>
<keyword id="KW-0496">Mitochondrion</keyword>
<keyword id="KW-1185">Reference proteome</keyword>
<keyword id="KW-0949">S-adenosyl-L-methionine</keyword>
<keyword id="KW-0808">Transferase</keyword>
<name>LIAS_SORBI</name>
<dbReference type="EC" id="2.8.1.8" evidence="1"/>
<dbReference type="EMBL" id="CM000765">
    <property type="protein sequence ID" value="EES12278.1"/>
    <property type="molecule type" value="Genomic_DNA"/>
</dbReference>
<dbReference type="RefSeq" id="XP_002447950.1">
    <property type="nucleotide sequence ID" value="XM_002447905.1"/>
</dbReference>
<dbReference type="SMR" id="C5Y9R0"/>
<dbReference type="FunCoup" id="C5Y9R0">
    <property type="interactions" value="1077"/>
</dbReference>
<dbReference type="STRING" id="4558.C5Y9R0"/>
<dbReference type="EnsemblPlants" id="EES12278">
    <property type="protein sequence ID" value="EES12278"/>
    <property type="gene ID" value="SORBI_3006G103100"/>
</dbReference>
<dbReference type="GeneID" id="8057459"/>
<dbReference type="Gramene" id="EES12278">
    <property type="protein sequence ID" value="EES12278"/>
    <property type="gene ID" value="SORBI_3006G103100"/>
</dbReference>
<dbReference type="KEGG" id="sbi:8057459"/>
<dbReference type="eggNOG" id="KOG2672">
    <property type="taxonomic scope" value="Eukaryota"/>
</dbReference>
<dbReference type="HOGENOM" id="CLU_033144_2_0_1"/>
<dbReference type="InParanoid" id="C5Y9R0"/>
<dbReference type="OMA" id="PYCDIDF"/>
<dbReference type="OrthoDB" id="3231at2759"/>
<dbReference type="UniPathway" id="UPA00538">
    <property type="reaction ID" value="UER00593"/>
</dbReference>
<dbReference type="Proteomes" id="UP000000768">
    <property type="component" value="Chromosome 6"/>
</dbReference>
<dbReference type="GO" id="GO:0005759">
    <property type="term" value="C:mitochondrial matrix"/>
    <property type="evidence" value="ECO:0007669"/>
    <property type="project" value="EnsemblPlants"/>
</dbReference>
<dbReference type="GO" id="GO:0005739">
    <property type="term" value="C:mitochondrion"/>
    <property type="evidence" value="ECO:0000318"/>
    <property type="project" value="GO_Central"/>
</dbReference>
<dbReference type="GO" id="GO:0051539">
    <property type="term" value="F:4 iron, 4 sulfur cluster binding"/>
    <property type="evidence" value="ECO:0007669"/>
    <property type="project" value="UniProtKB-UniRule"/>
</dbReference>
<dbReference type="GO" id="GO:0016992">
    <property type="term" value="F:lipoate synthase activity"/>
    <property type="evidence" value="ECO:0000318"/>
    <property type="project" value="GO_Central"/>
</dbReference>
<dbReference type="GO" id="GO:0046872">
    <property type="term" value="F:metal ion binding"/>
    <property type="evidence" value="ECO:0007669"/>
    <property type="project" value="UniProtKB-KW"/>
</dbReference>
<dbReference type="GO" id="GO:0009107">
    <property type="term" value="P:lipoate biosynthetic process"/>
    <property type="evidence" value="ECO:0000318"/>
    <property type="project" value="GO_Central"/>
</dbReference>
<dbReference type="CDD" id="cd01335">
    <property type="entry name" value="Radical_SAM"/>
    <property type="match status" value="1"/>
</dbReference>
<dbReference type="FunFam" id="3.20.20.70:FF:000125">
    <property type="entry name" value="Lipoyl synthase, mitochondrial"/>
    <property type="match status" value="1"/>
</dbReference>
<dbReference type="Gene3D" id="3.20.20.70">
    <property type="entry name" value="Aldolase class I"/>
    <property type="match status" value="1"/>
</dbReference>
<dbReference type="HAMAP" id="MF_00206">
    <property type="entry name" value="Lipoyl_synth"/>
    <property type="match status" value="1"/>
</dbReference>
<dbReference type="HAMAP" id="MF_03128">
    <property type="entry name" value="Lipoyl_synth_plantM"/>
    <property type="match status" value="1"/>
</dbReference>
<dbReference type="InterPro" id="IPR013785">
    <property type="entry name" value="Aldolase_TIM"/>
</dbReference>
<dbReference type="InterPro" id="IPR006638">
    <property type="entry name" value="Elp3/MiaA/NifB-like_rSAM"/>
</dbReference>
<dbReference type="InterPro" id="IPR031691">
    <property type="entry name" value="LIAS_N"/>
</dbReference>
<dbReference type="InterPro" id="IPR003698">
    <property type="entry name" value="Lipoyl_synth"/>
</dbReference>
<dbReference type="InterPro" id="IPR027527">
    <property type="entry name" value="Lipoyl_synth_mt"/>
</dbReference>
<dbReference type="InterPro" id="IPR007197">
    <property type="entry name" value="rSAM"/>
</dbReference>
<dbReference type="NCBIfam" id="TIGR00510">
    <property type="entry name" value="lipA"/>
    <property type="match status" value="1"/>
</dbReference>
<dbReference type="NCBIfam" id="NF004019">
    <property type="entry name" value="PRK05481.1"/>
    <property type="match status" value="1"/>
</dbReference>
<dbReference type="NCBIfam" id="NF009544">
    <property type="entry name" value="PRK12928.1"/>
    <property type="match status" value="1"/>
</dbReference>
<dbReference type="PANTHER" id="PTHR10949">
    <property type="entry name" value="LIPOYL SYNTHASE"/>
    <property type="match status" value="1"/>
</dbReference>
<dbReference type="PANTHER" id="PTHR10949:SF0">
    <property type="entry name" value="LIPOYL SYNTHASE, MITOCHONDRIAL"/>
    <property type="match status" value="1"/>
</dbReference>
<dbReference type="Pfam" id="PF16881">
    <property type="entry name" value="LIAS_N"/>
    <property type="match status" value="1"/>
</dbReference>
<dbReference type="Pfam" id="PF04055">
    <property type="entry name" value="Radical_SAM"/>
    <property type="match status" value="1"/>
</dbReference>
<dbReference type="SFLD" id="SFLDF00271">
    <property type="entry name" value="lipoyl_synthase"/>
    <property type="match status" value="1"/>
</dbReference>
<dbReference type="SFLD" id="SFLDG01058">
    <property type="entry name" value="lipoyl_synthase_like"/>
    <property type="match status" value="1"/>
</dbReference>
<dbReference type="SMART" id="SM00729">
    <property type="entry name" value="Elp3"/>
    <property type="match status" value="1"/>
</dbReference>
<dbReference type="SUPFAM" id="SSF102114">
    <property type="entry name" value="Radical SAM enzymes"/>
    <property type="match status" value="1"/>
</dbReference>
<dbReference type="PROSITE" id="PS51918">
    <property type="entry name" value="RADICAL_SAM"/>
    <property type="match status" value="1"/>
</dbReference>